<keyword id="KW-0028">Amino-acid biosynthesis</keyword>
<keyword id="KW-0055">Arginine biosynthesis</keyword>
<keyword id="KW-0963">Cytoplasm</keyword>
<keyword id="KW-0238">DNA-binding</keyword>
<keyword id="KW-0678">Repressor</keyword>
<keyword id="KW-0804">Transcription</keyword>
<keyword id="KW-0805">Transcription regulation</keyword>
<proteinExistence type="inferred from homology"/>
<comment type="function">
    <text evidence="1">Regulates arginine biosynthesis genes.</text>
</comment>
<comment type="pathway">
    <text>Amino-acid biosynthesis; L-arginine biosynthesis [regulation].</text>
</comment>
<comment type="subcellular location">
    <subcellularLocation>
        <location evidence="1">Cytoplasm</location>
    </subcellularLocation>
</comment>
<comment type="similarity">
    <text evidence="2">Belongs to the ArgR family.</text>
</comment>
<evidence type="ECO:0000250" key="1"/>
<evidence type="ECO:0000305" key="2"/>
<feature type="chain" id="PRO_0000205110" description="Arginine repressor">
    <location>
        <begin position="1"/>
        <end position="156"/>
    </location>
</feature>
<protein>
    <recommendedName>
        <fullName>Arginine repressor</fullName>
    </recommendedName>
</protein>
<accession>P0A1B4</accession>
<accession>P37170</accession>
<sequence>MRSSAKQEELVRAFKALLKEEKFSSQGEIVLALQDQGFENINQSKVSRMLTKFGAVRTRNAKMEMVYCLPAELGVPTTSSPLKNLVLDIDYNDAVVVIHTSPGAAQLIARLLDSLGKAEGILGTIAGDDTIFTTPASGFSVRDLYEAILELFEQEL</sequence>
<organism>
    <name type="scientific">Salmonella typhi</name>
    <dbReference type="NCBI Taxonomy" id="90370"/>
    <lineage>
        <taxon>Bacteria</taxon>
        <taxon>Pseudomonadati</taxon>
        <taxon>Pseudomonadota</taxon>
        <taxon>Gammaproteobacteria</taxon>
        <taxon>Enterobacterales</taxon>
        <taxon>Enterobacteriaceae</taxon>
        <taxon>Salmonella</taxon>
    </lineage>
</organism>
<dbReference type="EMBL" id="AL513382">
    <property type="protein sequence ID" value="CAD07875.1"/>
    <property type="molecule type" value="Genomic_DNA"/>
</dbReference>
<dbReference type="EMBL" id="AE014613">
    <property type="protein sequence ID" value="AAO70810.1"/>
    <property type="molecule type" value="Genomic_DNA"/>
</dbReference>
<dbReference type="RefSeq" id="NP_457736.1">
    <property type="nucleotide sequence ID" value="NC_003198.1"/>
</dbReference>
<dbReference type="RefSeq" id="WP_001257852.1">
    <property type="nucleotide sequence ID" value="NZ_WSUR01000038.1"/>
</dbReference>
<dbReference type="SMR" id="P0A1B4"/>
<dbReference type="STRING" id="220341.gene:17587388"/>
<dbReference type="KEGG" id="stt:t3275"/>
<dbReference type="KEGG" id="sty:STY3540"/>
<dbReference type="PATRIC" id="fig|220341.7.peg.3604"/>
<dbReference type="eggNOG" id="COG1438">
    <property type="taxonomic scope" value="Bacteria"/>
</dbReference>
<dbReference type="HOGENOM" id="CLU_097103_2_0_6"/>
<dbReference type="OMA" id="MHAVKTR"/>
<dbReference type="OrthoDB" id="7060358at2"/>
<dbReference type="UniPathway" id="UPA00068"/>
<dbReference type="Proteomes" id="UP000000541">
    <property type="component" value="Chromosome"/>
</dbReference>
<dbReference type="Proteomes" id="UP000002670">
    <property type="component" value="Chromosome"/>
</dbReference>
<dbReference type="GO" id="GO:0005737">
    <property type="term" value="C:cytoplasm"/>
    <property type="evidence" value="ECO:0007669"/>
    <property type="project" value="UniProtKB-SubCell"/>
</dbReference>
<dbReference type="GO" id="GO:0034618">
    <property type="term" value="F:arginine binding"/>
    <property type="evidence" value="ECO:0007669"/>
    <property type="project" value="InterPro"/>
</dbReference>
<dbReference type="GO" id="GO:0003677">
    <property type="term" value="F:DNA binding"/>
    <property type="evidence" value="ECO:0007669"/>
    <property type="project" value="UniProtKB-KW"/>
</dbReference>
<dbReference type="GO" id="GO:0003700">
    <property type="term" value="F:DNA-binding transcription factor activity"/>
    <property type="evidence" value="ECO:0007669"/>
    <property type="project" value="UniProtKB-UniRule"/>
</dbReference>
<dbReference type="GO" id="GO:0006526">
    <property type="term" value="P:L-arginine biosynthetic process"/>
    <property type="evidence" value="ECO:0007669"/>
    <property type="project" value="UniProtKB-UniPathway"/>
</dbReference>
<dbReference type="GO" id="GO:0051259">
    <property type="term" value="P:protein complex oligomerization"/>
    <property type="evidence" value="ECO:0007669"/>
    <property type="project" value="InterPro"/>
</dbReference>
<dbReference type="GO" id="GO:1900079">
    <property type="term" value="P:regulation of arginine biosynthetic process"/>
    <property type="evidence" value="ECO:0007669"/>
    <property type="project" value="UniProtKB-UniRule"/>
</dbReference>
<dbReference type="FunFam" id="1.10.10.10:FF:000074">
    <property type="entry name" value="Arginine repressor"/>
    <property type="match status" value="1"/>
</dbReference>
<dbReference type="FunFam" id="3.30.1360.40:FF:000004">
    <property type="entry name" value="Arginine repressor"/>
    <property type="match status" value="1"/>
</dbReference>
<dbReference type="Gene3D" id="3.30.1360.40">
    <property type="match status" value="1"/>
</dbReference>
<dbReference type="Gene3D" id="1.10.10.10">
    <property type="entry name" value="Winged helix-like DNA-binding domain superfamily/Winged helix DNA-binding domain"/>
    <property type="match status" value="1"/>
</dbReference>
<dbReference type="HAMAP" id="MF_00173">
    <property type="entry name" value="Arg_repressor"/>
    <property type="match status" value="1"/>
</dbReference>
<dbReference type="InterPro" id="IPR001669">
    <property type="entry name" value="Arg_repress"/>
</dbReference>
<dbReference type="InterPro" id="IPR020899">
    <property type="entry name" value="Arg_repress_C"/>
</dbReference>
<dbReference type="InterPro" id="IPR036251">
    <property type="entry name" value="Arg_repress_C_sf"/>
</dbReference>
<dbReference type="InterPro" id="IPR020900">
    <property type="entry name" value="Arg_repress_DNA-bd"/>
</dbReference>
<dbReference type="InterPro" id="IPR036388">
    <property type="entry name" value="WH-like_DNA-bd_sf"/>
</dbReference>
<dbReference type="InterPro" id="IPR036390">
    <property type="entry name" value="WH_DNA-bd_sf"/>
</dbReference>
<dbReference type="NCBIfam" id="TIGR01529">
    <property type="entry name" value="argR_whole"/>
    <property type="match status" value="1"/>
</dbReference>
<dbReference type="NCBIfam" id="NF003457">
    <property type="entry name" value="PRK05066.1"/>
    <property type="match status" value="1"/>
</dbReference>
<dbReference type="PANTHER" id="PTHR34471">
    <property type="entry name" value="ARGININE REPRESSOR"/>
    <property type="match status" value="1"/>
</dbReference>
<dbReference type="PANTHER" id="PTHR34471:SF1">
    <property type="entry name" value="ARGININE REPRESSOR"/>
    <property type="match status" value="1"/>
</dbReference>
<dbReference type="Pfam" id="PF01316">
    <property type="entry name" value="Arg_repressor"/>
    <property type="match status" value="1"/>
</dbReference>
<dbReference type="Pfam" id="PF02863">
    <property type="entry name" value="Arg_repressor_C"/>
    <property type="match status" value="1"/>
</dbReference>
<dbReference type="PRINTS" id="PR01467">
    <property type="entry name" value="ARGREPRESSOR"/>
</dbReference>
<dbReference type="SUPFAM" id="SSF55252">
    <property type="entry name" value="C-terminal domain of arginine repressor"/>
    <property type="match status" value="1"/>
</dbReference>
<dbReference type="SUPFAM" id="SSF46785">
    <property type="entry name" value="Winged helix' DNA-binding domain"/>
    <property type="match status" value="1"/>
</dbReference>
<gene>
    <name type="primary">argR</name>
    <name type="ordered locus">STY3540</name>
    <name type="ordered locus">t3275</name>
</gene>
<reference key="1">
    <citation type="journal article" date="2001" name="Nature">
        <title>Complete genome sequence of a multiple drug resistant Salmonella enterica serovar Typhi CT18.</title>
        <authorList>
            <person name="Parkhill J."/>
            <person name="Dougan G."/>
            <person name="James K.D."/>
            <person name="Thomson N.R."/>
            <person name="Pickard D."/>
            <person name="Wain J."/>
            <person name="Churcher C.M."/>
            <person name="Mungall K.L."/>
            <person name="Bentley S.D."/>
            <person name="Holden M.T.G."/>
            <person name="Sebaihia M."/>
            <person name="Baker S."/>
            <person name="Basham D."/>
            <person name="Brooks K."/>
            <person name="Chillingworth T."/>
            <person name="Connerton P."/>
            <person name="Cronin A."/>
            <person name="Davis P."/>
            <person name="Davies R.M."/>
            <person name="Dowd L."/>
            <person name="White N."/>
            <person name="Farrar J."/>
            <person name="Feltwell T."/>
            <person name="Hamlin N."/>
            <person name="Haque A."/>
            <person name="Hien T.T."/>
            <person name="Holroyd S."/>
            <person name="Jagels K."/>
            <person name="Krogh A."/>
            <person name="Larsen T.S."/>
            <person name="Leather S."/>
            <person name="Moule S."/>
            <person name="O'Gaora P."/>
            <person name="Parry C."/>
            <person name="Quail M.A."/>
            <person name="Rutherford K.M."/>
            <person name="Simmonds M."/>
            <person name="Skelton J."/>
            <person name="Stevens K."/>
            <person name="Whitehead S."/>
            <person name="Barrell B.G."/>
        </authorList>
    </citation>
    <scope>NUCLEOTIDE SEQUENCE [LARGE SCALE GENOMIC DNA]</scope>
    <source>
        <strain>CT18</strain>
    </source>
</reference>
<reference key="2">
    <citation type="journal article" date="2003" name="J. Bacteriol.">
        <title>Comparative genomics of Salmonella enterica serovar Typhi strains Ty2 and CT18.</title>
        <authorList>
            <person name="Deng W."/>
            <person name="Liou S.-R."/>
            <person name="Plunkett G. III"/>
            <person name="Mayhew G.F."/>
            <person name="Rose D.J."/>
            <person name="Burland V."/>
            <person name="Kodoyianni V."/>
            <person name="Schwartz D.C."/>
            <person name="Blattner F.R."/>
        </authorList>
    </citation>
    <scope>NUCLEOTIDE SEQUENCE [LARGE SCALE GENOMIC DNA]</scope>
    <source>
        <strain>ATCC 700931 / Ty2</strain>
    </source>
</reference>
<name>ARGR_SALTI</name>